<comment type="function">
    <text evidence="1">One of the primary rRNA binding proteins. Required for association of the 30S and 50S subunits to form the 70S ribosome, for tRNA binding and peptide bond formation. It has been suggested to have peptidyltransferase activity; this is somewhat controversial. Makes several contacts with the 16S rRNA in the 70S ribosome.</text>
</comment>
<comment type="subunit">
    <text evidence="1">Part of the 50S ribosomal subunit. Forms a bridge to the 30S subunit in the 70S ribosome.</text>
</comment>
<comment type="similarity">
    <text evidence="1">Belongs to the universal ribosomal protein uL2 family.</text>
</comment>
<protein>
    <recommendedName>
        <fullName evidence="1">Large ribosomal subunit protein uL2</fullName>
    </recommendedName>
    <alternativeName>
        <fullName evidence="3">50S ribosomal protein L2</fullName>
    </alternativeName>
</protein>
<reference key="1">
    <citation type="journal article" date="2008" name="Proc. Natl. Acad. Sci. U.S.A.">
        <title>Complete genome of the uncultured termite group 1 bacteria in a single host protist cell.</title>
        <authorList>
            <person name="Hongoh Y."/>
            <person name="Sharma V.K."/>
            <person name="Prakash T."/>
            <person name="Noda S."/>
            <person name="Taylor T.D."/>
            <person name="Kudo T."/>
            <person name="Sakaki Y."/>
            <person name="Toyoda A."/>
            <person name="Hattori M."/>
            <person name="Ohkuma M."/>
        </authorList>
    </citation>
    <scope>NUCLEOTIDE SEQUENCE [LARGE SCALE GENOMIC DNA]</scope>
</reference>
<gene>
    <name evidence="1" type="primary">rplB</name>
    <name type="ordered locus">TGRD_085</name>
</gene>
<keyword id="KW-0687">Ribonucleoprotein</keyword>
<keyword id="KW-0689">Ribosomal protein</keyword>
<keyword id="KW-0694">RNA-binding</keyword>
<keyword id="KW-0699">rRNA-binding</keyword>
<name>RL2_ENDTX</name>
<evidence type="ECO:0000255" key="1">
    <source>
        <dbReference type="HAMAP-Rule" id="MF_01320"/>
    </source>
</evidence>
<evidence type="ECO:0000256" key="2">
    <source>
        <dbReference type="SAM" id="MobiDB-lite"/>
    </source>
</evidence>
<evidence type="ECO:0000305" key="3"/>
<feature type="chain" id="PRO_1000141636" description="Large ribosomal subunit protein uL2">
    <location>
        <begin position="1"/>
        <end position="275"/>
    </location>
</feature>
<feature type="region of interest" description="Disordered" evidence="2">
    <location>
        <begin position="222"/>
        <end position="257"/>
    </location>
</feature>
<feature type="compositionally biased region" description="Polar residues" evidence="2">
    <location>
        <begin position="240"/>
        <end position="250"/>
    </location>
</feature>
<dbReference type="EMBL" id="AP009510">
    <property type="protein sequence ID" value="BAG13568.1"/>
    <property type="molecule type" value="Genomic_DNA"/>
</dbReference>
<dbReference type="RefSeq" id="WP_015423097.1">
    <property type="nucleotide sequence ID" value="NC_020419.1"/>
</dbReference>
<dbReference type="SMR" id="B1GZ86"/>
<dbReference type="STRING" id="471821.TGRD_085"/>
<dbReference type="KEGG" id="rsd:TGRD_085"/>
<dbReference type="PATRIC" id="fig|471821.5.peg.129"/>
<dbReference type="HOGENOM" id="CLU_036235_2_1_0"/>
<dbReference type="Proteomes" id="UP000001691">
    <property type="component" value="Chromosome"/>
</dbReference>
<dbReference type="GO" id="GO:0015934">
    <property type="term" value="C:large ribosomal subunit"/>
    <property type="evidence" value="ECO:0007669"/>
    <property type="project" value="InterPro"/>
</dbReference>
<dbReference type="GO" id="GO:0019843">
    <property type="term" value="F:rRNA binding"/>
    <property type="evidence" value="ECO:0007669"/>
    <property type="project" value="UniProtKB-UniRule"/>
</dbReference>
<dbReference type="GO" id="GO:0003735">
    <property type="term" value="F:structural constituent of ribosome"/>
    <property type="evidence" value="ECO:0007669"/>
    <property type="project" value="InterPro"/>
</dbReference>
<dbReference type="GO" id="GO:0016740">
    <property type="term" value="F:transferase activity"/>
    <property type="evidence" value="ECO:0007669"/>
    <property type="project" value="InterPro"/>
</dbReference>
<dbReference type="GO" id="GO:0002181">
    <property type="term" value="P:cytoplasmic translation"/>
    <property type="evidence" value="ECO:0007669"/>
    <property type="project" value="TreeGrafter"/>
</dbReference>
<dbReference type="FunFam" id="2.30.30.30:FF:000001">
    <property type="entry name" value="50S ribosomal protein L2"/>
    <property type="match status" value="1"/>
</dbReference>
<dbReference type="FunFam" id="2.40.50.140:FF:000003">
    <property type="entry name" value="50S ribosomal protein L2"/>
    <property type="match status" value="1"/>
</dbReference>
<dbReference type="FunFam" id="4.10.950.10:FF:000001">
    <property type="entry name" value="50S ribosomal protein L2"/>
    <property type="match status" value="1"/>
</dbReference>
<dbReference type="Gene3D" id="2.30.30.30">
    <property type="match status" value="1"/>
</dbReference>
<dbReference type="Gene3D" id="2.40.50.140">
    <property type="entry name" value="Nucleic acid-binding proteins"/>
    <property type="match status" value="1"/>
</dbReference>
<dbReference type="Gene3D" id="4.10.950.10">
    <property type="entry name" value="Ribosomal protein L2, domain 3"/>
    <property type="match status" value="1"/>
</dbReference>
<dbReference type="HAMAP" id="MF_01320_B">
    <property type="entry name" value="Ribosomal_uL2_B"/>
    <property type="match status" value="1"/>
</dbReference>
<dbReference type="InterPro" id="IPR012340">
    <property type="entry name" value="NA-bd_OB-fold"/>
</dbReference>
<dbReference type="InterPro" id="IPR014722">
    <property type="entry name" value="Rib_uL2_dom2"/>
</dbReference>
<dbReference type="InterPro" id="IPR002171">
    <property type="entry name" value="Ribosomal_uL2"/>
</dbReference>
<dbReference type="InterPro" id="IPR005880">
    <property type="entry name" value="Ribosomal_uL2_bac/org-type"/>
</dbReference>
<dbReference type="InterPro" id="IPR022669">
    <property type="entry name" value="Ribosomal_uL2_C"/>
</dbReference>
<dbReference type="InterPro" id="IPR022671">
    <property type="entry name" value="Ribosomal_uL2_CS"/>
</dbReference>
<dbReference type="InterPro" id="IPR014726">
    <property type="entry name" value="Ribosomal_uL2_dom3"/>
</dbReference>
<dbReference type="InterPro" id="IPR022666">
    <property type="entry name" value="Ribosomal_uL2_RNA-bd_dom"/>
</dbReference>
<dbReference type="InterPro" id="IPR008991">
    <property type="entry name" value="Translation_prot_SH3-like_sf"/>
</dbReference>
<dbReference type="NCBIfam" id="TIGR01171">
    <property type="entry name" value="rplB_bact"/>
    <property type="match status" value="1"/>
</dbReference>
<dbReference type="PANTHER" id="PTHR13691:SF5">
    <property type="entry name" value="LARGE RIBOSOMAL SUBUNIT PROTEIN UL2M"/>
    <property type="match status" value="1"/>
</dbReference>
<dbReference type="PANTHER" id="PTHR13691">
    <property type="entry name" value="RIBOSOMAL PROTEIN L2"/>
    <property type="match status" value="1"/>
</dbReference>
<dbReference type="Pfam" id="PF00181">
    <property type="entry name" value="Ribosomal_L2"/>
    <property type="match status" value="1"/>
</dbReference>
<dbReference type="Pfam" id="PF03947">
    <property type="entry name" value="Ribosomal_L2_C"/>
    <property type="match status" value="1"/>
</dbReference>
<dbReference type="PIRSF" id="PIRSF002158">
    <property type="entry name" value="Ribosomal_L2"/>
    <property type="match status" value="1"/>
</dbReference>
<dbReference type="SMART" id="SM01383">
    <property type="entry name" value="Ribosomal_L2"/>
    <property type="match status" value="1"/>
</dbReference>
<dbReference type="SMART" id="SM01382">
    <property type="entry name" value="Ribosomal_L2_C"/>
    <property type="match status" value="1"/>
</dbReference>
<dbReference type="SUPFAM" id="SSF50249">
    <property type="entry name" value="Nucleic acid-binding proteins"/>
    <property type="match status" value="1"/>
</dbReference>
<dbReference type="SUPFAM" id="SSF50104">
    <property type="entry name" value="Translation proteins SH3-like domain"/>
    <property type="match status" value="1"/>
</dbReference>
<dbReference type="PROSITE" id="PS00467">
    <property type="entry name" value="RIBOSOMAL_L2"/>
    <property type="match status" value="1"/>
</dbReference>
<sequence>MPIKTFKPYTQSRRHMSVSSFSNITKTSPEKSLTKIIKKKGGRNNTGQIMVRFRGGGHKRFYRIIDFKRDKFNIPAEVMSIEYDPNRSSSIALLQYLDGEKRYILYPLGVNVGDLLVSGPDAGIKPGNSLPISNIPVGTFVHNLELVEGKGGQFVRSAGVAAQILAKEGDYAHVRMPSGEIRLIRVKCYATIGQVGNLDHENITLGSAGRNRHMGRKPHVRGTAMNAVDHPHGGGRGRSKGNNQPRSPWNQPAKGFKTRPKKIWDWVIISRRNKS</sequence>
<proteinExistence type="inferred from homology"/>
<accession>B1GZ86</accession>
<organism>
    <name type="scientific">Endomicrobium trichonymphae</name>
    <dbReference type="NCBI Taxonomy" id="1408204"/>
    <lineage>
        <taxon>Bacteria</taxon>
        <taxon>Pseudomonadati</taxon>
        <taxon>Elusimicrobiota</taxon>
        <taxon>Endomicrobiia</taxon>
        <taxon>Endomicrobiales</taxon>
        <taxon>Endomicrobiaceae</taxon>
        <taxon>Candidatus Endomicrobiellum</taxon>
    </lineage>
</organism>